<organism>
    <name type="scientific">Phoma sp</name>
    <dbReference type="NCBI Taxonomy" id="1707701"/>
    <lineage>
        <taxon>Eukaryota</taxon>
        <taxon>Fungi</taxon>
        <taxon>Dikarya</taxon>
        <taxon>Ascomycota</taxon>
        <taxon>Pezizomycotina</taxon>
        <taxon>Dothideomycetes</taxon>
        <taxon>Pleosporomycetidae</taxon>
        <taxon>Pleosporales</taxon>
        <taxon>Pleosporineae</taxon>
        <taxon>Didymellaceae</taxon>
        <taxon>Phoma</taxon>
    </lineage>
</organism>
<dbReference type="EC" id="1.-.-.-" evidence="4"/>
<dbReference type="EMBL" id="MK400120">
    <property type="protein sequence ID" value="QCO93115.1"/>
    <property type="molecule type" value="Genomic_DNA"/>
</dbReference>
<dbReference type="SMR" id="A0A4P8GEB4"/>
<dbReference type="UniPathway" id="UPA00213"/>
<dbReference type="GO" id="GO:0020037">
    <property type="term" value="F:heme binding"/>
    <property type="evidence" value="ECO:0007669"/>
    <property type="project" value="InterPro"/>
</dbReference>
<dbReference type="GO" id="GO:0005506">
    <property type="term" value="F:iron ion binding"/>
    <property type="evidence" value="ECO:0007669"/>
    <property type="project" value="InterPro"/>
</dbReference>
<dbReference type="GO" id="GO:0004497">
    <property type="term" value="F:monooxygenase activity"/>
    <property type="evidence" value="ECO:0007669"/>
    <property type="project" value="UniProtKB-KW"/>
</dbReference>
<dbReference type="GO" id="GO:0016705">
    <property type="term" value="F:oxidoreductase activity, acting on paired donors, with incorporation or reduction of molecular oxygen"/>
    <property type="evidence" value="ECO:0007669"/>
    <property type="project" value="InterPro"/>
</dbReference>
<dbReference type="GO" id="GO:0016114">
    <property type="term" value="P:terpenoid biosynthetic process"/>
    <property type="evidence" value="ECO:0007669"/>
    <property type="project" value="UniProtKB-UniPathway"/>
</dbReference>
<dbReference type="Gene3D" id="1.10.630.10">
    <property type="entry name" value="Cytochrome P450"/>
    <property type="match status" value="1"/>
</dbReference>
<dbReference type="InterPro" id="IPR001128">
    <property type="entry name" value="Cyt_P450"/>
</dbReference>
<dbReference type="InterPro" id="IPR002401">
    <property type="entry name" value="Cyt_P450_E_grp-I"/>
</dbReference>
<dbReference type="InterPro" id="IPR036396">
    <property type="entry name" value="Cyt_P450_sf"/>
</dbReference>
<dbReference type="InterPro" id="IPR050121">
    <property type="entry name" value="Cytochrome_P450_monoxygenase"/>
</dbReference>
<dbReference type="PANTHER" id="PTHR24305">
    <property type="entry name" value="CYTOCHROME P450"/>
    <property type="match status" value="1"/>
</dbReference>
<dbReference type="PANTHER" id="PTHR24305:SF78">
    <property type="entry name" value="P450, PUTATIVE (EUROFUNG)-RELATED"/>
    <property type="match status" value="1"/>
</dbReference>
<dbReference type="Pfam" id="PF00067">
    <property type="entry name" value="p450"/>
    <property type="match status" value="1"/>
</dbReference>
<dbReference type="PRINTS" id="PR00463">
    <property type="entry name" value="EP450I"/>
</dbReference>
<dbReference type="PRINTS" id="PR00385">
    <property type="entry name" value="P450"/>
</dbReference>
<dbReference type="SUPFAM" id="SSF48264">
    <property type="entry name" value="Cytochrome P450"/>
    <property type="match status" value="1"/>
</dbReference>
<comment type="function">
    <text evidence="4 9">Cytochrome P450 monooxygenase; part of the gene cluster that mediates the biosynthesis of eupenifeldin, a bistropolone meroterpenoid that acts as an antitumor agent (PubMed:30980906). The first step of eupenifeldin biosynthesis is the biosynthesis of 3-methylorcinaldehyde performed by the non-reducing polyketide synthase eupA (PubMed:30980906). Oxidative dearomatization of 3-methylorcinaldehyde likely catalyzed by the FAD-dependent monooxygenase eupB is followed by oxidative ring expansion by the 2-oxoglutarate-dependent dioxygenase eupC to provide the first tropolone metabolite, tropolone stipitaldehyde (Probable). In parallel, generation of sesquiterpene alpha-humulene from farnesylpyrophosphate (FPP) is catalyzed by the terpene cyclase eupE (PubMed:30980906). The cytochrome P450 monooxygenase eupD then hydroxylates humulene to humulenol (PubMed:30980906). The putative Diels-Alderase eupF probably catalyzes the formation of the tropolone-humulene skeleton by linking humulenol and the polyketide moiety (Probable). The short-chain dehydrogenase/reductase eupG and the flavin-dependent monooxygenase eupH are also essential for eupenifeldin biosynthesis and are likely the additional decorating enzymes of the tropolone-humulene skeleton to produce final eupenifeldin or derivatives (Probable).</text>
</comment>
<comment type="cofactor">
    <cofactor evidence="1">
        <name>heme</name>
        <dbReference type="ChEBI" id="CHEBI:30413"/>
    </cofactor>
</comment>
<comment type="pathway">
    <text evidence="4">Secondary metabolite biosynthesis; terpenoid biosynthesis.</text>
</comment>
<comment type="disruption phenotype">
    <text evidence="4">Abolishes the production of eupenifeldin as well as of the intermediate humulenol.</text>
</comment>
<comment type="biotechnology">
    <text evidence="3 5 6">Eupenifeldin is a bistropolone-humulene meroterpenoid first discovered as an antitumor and anti-leukemia agent (PubMed:8360103). This metabolite also shows anthelmintic activity against the parasitic worm Hemonchus contortus, anti-malarial activity as well as antifungal activity (PubMed:18095654, Ref.4).</text>
</comment>
<comment type="similarity">
    <text evidence="8">Belongs to the cytochrome P450 family.</text>
</comment>
<name>EUPD_PHOSX</name>
<accession>A0A4P8GEB4</accession>
<gene>
    <name evidence="7" type="primary">eupD</name>
    <name type="ORF">gme12637</name>
</gene>
<proteinExistence type="evidence at protein level"/>
<keyword id="KW-0349">Heme</keyword>
<keyword id="KW-0408">Iron</keyword>
<keyword id="KW-0479">Metal-binding</keyword>
<keyword id="KW-0503">Monooxygenase</keyword>
<keyword id="KW-0560">Oxidoreductase</keyword>
<keyword id="KW-0732">Signal</keyword>
<evidence type="ECO:0000250" key="1">
    <source>
        <dbReference type="UniProtKB" id="P04798"/>
    </source>
</evidence>
<evidence type="ECO:0000255" key="2"/>
<evidence type="ECO:0000269" key="3">
    <source>
    </source>
</evidence>
<evidence type="ECO:0000269" key="4">
    <source>
    </source>
</evidence>
<evidence type="ECO:0000269" key="5">
    <source>
    </source>
</evidence>
<evidence type="ECO:0000269" key="6">
    <source ref="4"/>
</evidence>
<evidence type="ECO:0000303" key="7">
    <source>
    </source>
</evidence>
<evidence type="ECO:0000305" key="8"/>
<evidence type="ECO:0000305" key="9">
    <source>
    </source>
</evidence>
<reference key="1">
    <citation type="journal article" date="2019" name="Fungal Genet. Biol.">
        <title>Identification of the gene cluster for bistropolone-humulene meroterpenoid biosynthesis in Phoma sp.</title>
        <authorList>
            <person name="Zhai Y."/>
            <person name="Li Y."/>
            <person name="Zhang J."/>
            <person name="Zhang Y."/>
            <person name="Ren F."/>
            <person name="Zhang X."/>
            <person name="Liu G."/>
            <person name="Liu X."/>
            <person name="Che Y."/>
        </authorList>
    </citation>
    <scope>NUCLEOTIDE SEQUENCE [GENOMIC DNA]</scope>
    <scope>FUNCTION</scope>
    <scope>DISRUPTION PHENOTYPE</scope>
    <scope>CATALYTIC ACTIVITY</scope>
    <scope>PATHWAY</scope>
    <source>
        <strain>XZ068 / CGMCC No. 10481</strain>
    </source>
</reference>
<reference key="2">
    <citation type="journal article" date="1993" name="J. Antibiot.">
        <title>Eupenifeldin, a novel cytotoxic bistropolone from Eupenicillium brefeldianum.</title>
        <authorList>
            <person name="Mayerl F."/>
            <person name="Gao Q."/>
            <person name="Huang S."/>
            <person name="Klohr S.E."/>
            <person name="Matson J.A."/>
            <person name="Gustavson D.R."/>
            <person name="Pirnik D.M."/>
            <person name="Berry R.L."/>
            <person name="Fairchild C."/>
            <person name="Rose W.C."/>
        </authorList>
    </citation>
    <scope>BIOTECHNOLOGY</scope>
</reference>
<reference key="3">
    <citation type="journal article" date="2008" name="J. Nat. Prod.">
        <title>Noreupenifeldin, a tropolone from an unidentified ascomycete.</title>
        <authorList>
            <person name="Ayers S."/>
            <person name="Zink D.L."/>
            <person name="Powell J.S."/>
            <person name="Brown C.M."/>
            <person name="Grund A."/>
            <person name="Bills G.F."/>
            <person name="Platas G."/>
            <person name="Thompson D."/>
            <person name="Singh S.B."/>
        </authorList>
    </citation>
    <scope>BIOTECHNOLOGY</scope>
</reference>
<reference key="4">
    <citation type="journal article" date="2008" name="Phytochem. Lett.">
        <title>Ramiferin, a bisphenol-sesquiterpene from the fungus Kionochaeta ramifera BCC 7585.</title>
        <authorList>
            <person name="Bunyapaiboonsri T."/>
            <person name="Veeranondha S."/>
            <person name="Boonruangprapa T."/>
            <person name="Somrithipol S."/>
        </authorList>
    </citation>
    <scope>BIOTECHNOLOGY</scope>
</reference>
<sequence>MSIAGLVTTLPWLMNMLRAVPGATGRFERFAGWCYEQLLLKRESLAVERATNHNHEPRDVMTWLINSMDEGDRCAPPTESALQEDARTLISAGSDTVAITFTNILYFLVKHPTIYQKLQRLMDHEFPQGYSSWTYNKAKGVPYIDYIIHETLRLRPAVPMGFLRQTPPQGLQIDEIFIPGDVIVNVPTYTIHRDSRYFYDAAKFIPERWEELSPDTAAYLAFQRGPFTCSGKNLATMQLRMLISCLALRYRIHFAPGEDGVAFATQEKETLTMWIPPLQMVFRPR</sequence>
<protein>
    <recommendedName>
        <fullName evidence="7">Cytochrome P450 monooxygenase eupD</fullName>
        <ecNumber evidence="4">1.-.-.-</ecNumber>
    </recommendedName>
    <alternativeName>
        <fullName evidence="7">Eupenifeldin biosynthesis cluster protein D</fullName>
    </alternativeName>
</protein>
<feature type="signal peptide" evidence="2">
    <location>
        <begin position="1"/>
        <end position="19"/>
    </location>
</feature>
<feature type="chain" id="PRO_5020416429" description="Cytochrome P450 monooxygenase eupD">
    <location>
        <begin position="20"/>
        <end position="285"/>
    </location>
</feature>
<feature type="binding site" description="axial binding residue" evidence="1">
    <location>
        <position position="229"/>
    </location>
    <ligand>
        <name>heme</name>
        <dbReference type="ChEBI" id="CHEBI:30413"/>
    </ligand>
    <ligandPart>
        <name>Fe</name>
        <dbReference type="ChEBI" id="CHEBI:18248"/>
    </ligandPart>
</feature>